<comment type="subcellular location">
    <subcellularLocation>
        <location evidence="2">Mitochondrion</location>
    </subcellularLocation>
</comment>
<comment type="similarity">
    <text evidence="2">Belongs to the PPR family. P subfamily.</text>
</comment>
<comment type="online information" name="Pentatricopeptide repeat proteins">
    <link uri="https://ppr.plantenergy.uwa.edu.au"/>
</comment>
<name>PPR99_ARATH</name>
<dbReference type="EMBL" id="AC010795">
    <property type="protein sequence ID" value="AAG51613.1"/>
    <property type="molecule type" value="Genomic_DNA"/>
</dbReference>
<dbReference type="EMBL" id="CP002684">
    <property type="protein sequence ID" value="AEE34059.1"/>
    <property type="molecule type" value="Genomic_DNA"/>
</dbReference>
<dbReference type="EMBL" id="CP002684">
    <property type="protein sequence ID" value="ANM61079.1"/>
    <property type="molecule type" value="Genomic_DNA"/>
</dbReference>
<dbReference type="EMBL" id="AY128387">
    <property type="protein sequence ID" value="AAM91590.1"/>
    <property type="molecule type" value="mRNA"/>
</dbReference>
<dbReference type="EMBL" id="BT000125">
    <property type="protein sequence ID" value="AAN15444.1"/>
    <property type="molecule type" value="mRNA"/>
</dbReference>
<dbReference type="PIR" id="G96656">
    <property type="entry name" value="G96656"/>
</dbReference>
<dbReference type="RefSeq" id="NP_001323319.1">
    <property type="nucleotide sequence ID" value="NM_001334067.1"/>
</dbReference>
<dbReference type="RefSeq" id="NP_176501.1">
    <property type="nucleotide sequence ID" value="NM_104991.3"/>
</dbReference>
<dbReference type="SMR" id="Q9CAN0"/>
<dbReference type="BioGRID" id="27838">
    <property type="interactions" value="1"/>
</dbReference>
<dbReference type="FunCoup" id="Q9CAN0">
    <property type="interactions" value="66"/>
</dbReference>
<dbReference type="IntAct" id="Q9CAN0">
    <property type="interactions" value="1"/>
</dbReference>
<dbReference type="STRING" id="3702.Q9CAN0"/>
<dbReference type="iPTMnet" id="Q9CAN0"/>
<dbReference type="PaxDb" id="3702-AT1G63130.1"/>
<dbReference type="ProteomicsDB" id="225987"/>
<dbReference type="EnsemblPlants" id="AT1G63130.1">
    <property type="protein sequence ID" value="AT1G63130.1"/>
    <property type="gene ID" value="AT1G63130"/>
</dbReference>
<dbReference type="EnsemblPlants" id="AT1G63130.2">
    <property type="protein sequence ID" value="AT1G63130.2"/>
    <property type="gene ID" value="AT1G63130"/>
</dbReference>
<dbReference type="GeneID" id="842617"/>
<dbReference type="Gramene" id="AT1G63130.1">
    <property type="protein sequence ID" value="AT1G63130.1"/>
    <property type="gene ID" value="AT1G63130"/>
</dbReference>
<dbReference type="Gramene" id="AT1G63130.2">
    <property type="protein sequence ID" value="AT1G63130.2"/>
    <property type="gene ID" value="AT1G63130"/>
</dbReference>
<dbReference type="KEGG" id="ath:AT1G63130"/>
<dbReference type="Araport" id="AT1G63130"/>
<dbReference type="TAIR" id="AT1G63130">
    <property type="gene designation" value="RPF6"/>
</dbReference>
<dbReference type="eggNOG" id="KOG4197">
    <property type="taxonomic scope" value="Eukaryota"/>
</dbReference>
<dbReference type="HOGENOM" id="CLU_002706_49_12_1"/>
<dbReference type="InParanoid" id="Q9CAN0"/>
<dbReference type="OMA" id="VQDNIIC"/>
<dbReference type="PhylomeDB" id="Q9CAN0"/>
<dbReference type="PRO" id="PR:Q9CAN0"/>
<dbReference type="Proteomes" id="UP000006548">
    <property type="component" value="Chromosome 1"/>
</dbReference>
<dbReference type="ExpressionAtlas" id="Q9CAN0">
    <property type="expression patterns" value="baseline and differential"/>
</dbReference>
<dbReference type="GO" id="GO:0005739">
    <property type="term" value="C:mitochondrion"/>
    <property type="evidence" value="ECO:0007669"/>
    <property type="project" value="UniProtKB-SubCell"/>
</dbReference>
<dbReference type="FunFam" id="1.25.40.10:FF:003300">
    <property type="entry name" value="Pentatricopeptide repeat-containing protein At1g62590"/>
    <property type="match status" value="1"/>
</dbReference>
<dbReference type="FunFam" id="1.25.40.10:FF:000558">
    <property type="entry name" value="Pentatricopeptide repeat-containing protein At5g39710"/>
    <property type="match status" value="1"/>
</dbReference>
<dbReference type="Gene3D" id="1.25.40.10">
    <property type="entry name" value="Tetratricopeptide repeat domain"/>
    <property type="match status" value="7"/>
</dbReference>
<dbReference type="InterPro" id="IPR051114">
    <property type="entry name" value="Mito_RNA_Proc_CCM1"/>
</dbReference>
<dbReference type="InterPro" id="IPR002885">
    <property type="entry name" value="Pentatricopeptide_rpt"/>
</dbReference>
<dbReference type="InterPro" id="IPR011990">
    <property type="entry name" value="TPR-like_helical_dom_sf"/>
</dbReference>
<dbReference type="NCBIfam" id="TIGR00756">
    <property type="entry name" value="PPR"/>
    <property type="match status" value="14"/>
</dbReference>
<dbReference type="PANTHER" id="PTHR47934:SF6">
    <property type="entry name" value="MITOCHONDRIAL GROUP I INTRON SPLICING FACTOR CCM1-RELATED"/>
    <property type="match status" value="1"/>
</dbReference>
<dbReference type="PANTHER" id="PTHR47934">
    <property type="entry name" value="PENTATRICOPEPTIDE REPEAT-CONTAINING PROTEIN PET309, MITOCHONDRIAL"/>
    <property type="match status" value="1"/>
</dbReference>
<dbReference type="Pfam" id="PF01535">
    <property type="entry name" value="PPR"/>
    <property type="match status" value="1"/>
</dbReference>
<dbReference type="Pfam" id="PF12854">
    <property type="entry name" value="PPR_1"/>
    <property type="match status" value="1"/>
</dbReference>
<dbReference type="Pfam" id="PF13041">
    <property type="entry name" value="PPR_2"/>
    <property type="match status" value="6"/>
</dbReference>
<dbReference type="SUPFAM" id="SSF81901">
    <property type="entry name" value="HCP-like"/>
    <property type="match status" value="1"/>
</dbReference>
<dbReference type="PROSITE" id="PS51375">
    <property type="entry name" value="PPR"/>
    <property type="match status" value="15"/>
</dbReference>
<feature type="transit peptide" description="Mitochondrion" evidence="1">
    <location>
        <begin position="1"/>
        <end position="22"/>
    </location>
</feature>
<feature type="chain" id="PRO_0000342840" description="Pentatricopeptide repeat-containing protein At1g63130, mitochondrial">
    <location>
        <begin position="23"/>
        <end position="630"/>
    </location>
</feature>
<feature type="repeat" description="PPR 1">
    <location>
        <begin position="80"/>
        <end position="114"/>
    </location>
</feature>
<feature type="repeat" description="PPR 2">
    <location>
        <begin position="115"/>
        <end position="149"/>
    </location>
</feature>
<feature type="repeat" description="PPR 3">
    <location>
        <begin position="150"/>
        <end position="184"/>
    </location>
</feature>
<feature type="repeat" description="PPR 4">
    <location>
        <begin position="185"/>
        <end position="219"/>
    </location>
</feature>
<feature type="repeat" description="PPR 5">
    <location>
        <begin position="220"/>
        <end position="254"/>
    </location>
</feature>
<feature type="repeat" description="PPR 6">
    <location>
        <begin position="255"/>
        <end position="289"/>
    </location>
</feature>
<feature type="repeat" description="PPR 7">
    <location>
        <begin position="290"/>
        <end position="324"/>
    </location>
</feature>
<feature type="repeat" description="PPR 8">
    <location>
        <begin position="325"/>
        <end position="359"/>
    </location>
</feature>
<feature type="repeat" description="PPR 9">
    <location>
        <begin position="360"/>
        <end position="394"/>
    </location>
</feature>
<feature type="repeat" description="PPR 10">
    <location>
        <begin position="395"/>
        <end position="429"/>
    </location>
</feature>
<feature type="repeat" description="PPR 11">
    <location>
        <begin position="430"/>
        <end position="464"/>
    </location>
</feature>
<feature type="repeat" description="PPR 12">
    <location>
        <begin position="465"/>
        <end position="499"/>
    </location>
</feature>
<feature type="repeat" description="PPR 13">
    <location>
        <begin position="500"/>
        <end position="534"/>
    </location>
</feature>
<feature type="repeat" description="PPR 14">
    <location>
        <begin position="535"/>
        <end position="569"/>
    </location>
</feature>
<feature type="repeat" description="PPR 15">
    <location>
        <begin position="570"/>
        <end position="604"/>
    </location>
</feature>
<evidence type="ECO:0000255" key="1"/>
<evidence type="ECO:0000305" key="2"/>
<sequence>MRRLFAISSTGNRFVHRSLLGKGKCGTAPPSFSHCSFWVRDFSGVRYDYRKISINRLNDLKLDDAVNLFGDMVKSRPFPSIVEFSKLLSAIAKMNKFDLVISLGEQMQNLGISHNLYTYSILINCFCRRSQLSLALAVLAKMMKLGYEPDIVTLNSLLNGFCHGNRISDAVSLVGQMVEMGYQPDSFTFNTLIHGLFRHNRASEAVALVDRMVVKGCQPDLVTYGIVVNGLCKRGDIDLALSLLKKMEQGKIEPGVVIYNTIIDALCNYKNVNDALNLFTEMDNKGIRPNVVTYNSLIRCLCNYGRWSDASRLLSDMIERKINPNVVTFSALIDAFVKEGKLVEAEKLYDEMIKRSIDPDIFTYSSLINGFCMHDRLDEAKHMFELMISKDCFPNVVTYNTLIKGFCKAKRVDEGMELFREMSQRGLVGNTVTYTTLIHGFFQARECDNAQIVFKQMVSDGVLPDIMTYSILLDGLCNNGKVETALVVFEYLQRSKMEPDIYTYNIMIEGMCKAGKVEDGWDLFCSLSLKGVKPNVVTYTTMMSGFCRKGLKEEADALFREMKEEGPLPDSGTYNTLIRAHLRDGDKAASAELIREMRSCRFVGDASTIGLVTNMLHDGRLDKSFLKMLS</sequence>
<organism>
    <name type="scientific">Arabidopsis thaliana</name>
    <name type="common">Mouse-ear cress</name>
    <dbReference type="NCBI Taxonomy" id="3702"/>
    <lineage>
        <taxon>Eukaryota</taxon>
        <taxon>Viridiplantae</taxon>
        <taxon>Streptophyta</taxon>
        <taxon>Embryophyta</taxon>
        <taxon>Tracheophyta</taxon>
        <taxon>Spermatophyta</taxon>
        <taxon>Magnoliopsida</taxon>
        <taxon>eudicotyledons</taxon>
        <taxon>Gunneridae</taxon>
        <taxon>Pentapetalae</taxon>
        <taxon>rosids</taxon>
        <taxon>malvids</taxon>
        <taxon>Brassicales</taxon>
        <taxon>Brassicaceae</taxon>
        <taxon>Camelineae</taxon>
        <taxon>Arabidopsis</taxon>
    </lineage>
</organism>
<gene>
    <name type="ordered locus">At1g63130</name>
    <name type="ORF">F16M19.5</name>
</gene>
<protein>
    <recommendedName>
        <fullName>Pentatricopeptide repeat-containing protein At1g63130, mitochondrial</fullName>
    </recommendedName>
</protein>
<accession>Q9CAN0</accession>
<proteinExistence type="evidence at transcript level"/>
<keyword id="KW-0496">Mitochondrion</keyword>
<keyword id="KW-1185">Reference proteome</keyword>
<keyword id="KW-0677">Repeat</keyword>
<keyword id="KW-0809">Transit peptide</keyword>
<reference key="1">
    <citation type="journal article" date="2000" name="Nature">
        <title>Sequence and analysis of chromosome 1 of the plant Arabidopsis thaliana.</title>
        <authorList>
            <person name="Theologis A."/>
            <person name="Ecker J.R."/>
            <person name="Palm C.J."/>
            <person name="Federspiel N.A."/>
            <person name="Kaul S."/>
            <person name="White O."/>
            <person name="Alonso J."/>
            <person name="Altafi H."/>
            <person name="Araujo R."/>
            <person name="Bowman C.L."/>
            <person name="Brooks S.Y."/>
            <person name="Buehler E."/>
            <person name="Chan A."/>
            <person name="Chao Q."/>
            <person name="Chen H."/>
            <person name="Cheuk R.F."/>
            <person name="Chin C.W."/>
            <person name="Chung M.K."/>
            <person name="Conn L."/>
            <person name="Conway A.B."/>
            <person name="Conway A.R."/>
            <person name="Creasy T.H."/>
            <person name="Dewar K."/>
            <person name="Dunn P."/>
            <person name="Etgu P."/>
            <person name="Feldblyum T.V."/>
            <person name="Feng J.-D."/>
            <person name="Fong B."/>
            <person name="Fujii C.Y."/>
            <person name="Gill J.E."/>
            <person name="Goldsmith A.D."/>
            <person name="Haas B."/>
            <person name="Hansen N.F."/>
            <person name="Hughes B."/>
            <person name="Huizar L."/>
            <person name="Hunter J.L."/>
            <person name="Jenkins J."/>
            <person name="Johnson-Hopson C."/>
            <person name="Khan S."/>
            <person name="Khaykin E."/>
            <person name="Kim C.J."/>
            <person name="Koo H.L."/>
            <person name="Kremenetskaia I."/>
            <person name="Kurtz D.B."/>
            <person name="Kwan A."/>
            <person name="Lam B."/>
            <person name="Langin-Hooper S."/>
            <person name="Lee A."/>
            <person name="Lee J.M."/>
            <person name="Lenz C.A."/>
            <person name="Li J.H."/>
            <person name="Li Y.-P."/>
            <person name="Lin X."/>
            <person name="Liu S.X."/>
            <person name="Liu Z.A."/>
            <person name="Luros J.S."/>
            <person name="Maiti R."/>
            <person name="Marziali A."/>
            <person name="Militscher J."/>
            <person name="Miranda M."/>
            <person name="Nguyen M."/>
            <person name="Nierman W.C."/>
            <person name="Osborne B.I."/>
            <person name="Pai G."/>
            <person name="Peterson J."/>
            <person name="Pham P.K."/>
            <person name="Rizzo M."/>
            <person name="Rooney T."/>
            <person name="Rowley D."/>
            <person name="Sakano H."/>
            <person name="Salzberg S.L."/>
            <person name="Schwartz J.R."/>
            <person name="Shinn P."/>
            <person name="Southwick A.M."/>
            <person name="Sun H."/>
            <person name="Tallon L.J."/>
            <person name="Tambunga G."/>
            <person name="Toriumi M.J."/>
            <person name="Town C.D."/>
            <person name="Utterback T."/>
            <person name="Van Aken S."/>
            <person name="Vaysberg M."/>
            <person name="Vysotskaia V.S."/>
            <person name="Walker M."/>
            <person name="Wu D."/>
            <person name="Yu G."/>
            <person name="Fraser C.M."/>
            <person name="Venter J.C."/>
            <person name="Davis R.W."/>
        </authorList>
    </citation>
    <scope>NUCLEOTIDE SEQUENCE [LARGE SCALE GENOMIC DNA]</scope>
    <source>
        <strain>cv. Columbia</strain>
    </source>
</reference>
<reference key="2">
    <citation type="journal article" date="2017" name="Plant J.">
        <title>Araport11: a complete reannotation of the Arabidopsis thaliana reference genome.</title>
        <authorList>
            <person name="Cheng C.Y."/>
            <person name="Krishnakumar V."/>
            <person name="Chan A.P."/>
            <person name="Thibaud-Nissen F."/>
            <person name="Schobel S."/>
            <person name="Town C.D."/>
        </authorList>
    </citation>
    <scope>GENOME REANNOTATION</scope>
    <source>
        <strain>cv. Columbia</strain>
    </source>
</reference>
<reference key="3">
    <citation type="journal article" date="2003" name="Science">
        <title>Empirical analysis of transcriptional activity in the Arabidopsis genome.</title>
        <authorList>
            <person name="Yamada K."/>
            <person name="Lim J."/>
            <person name="Dale J.M."/>
            <person name="Chen H."/>
            <person name="Shinn P."/>
            <person name="Palm C.J."/>
            <person name="Southwick A.M."/>
            <person name="Wu H.C."/>
            <person name="Kim C.J."/>
            <person name="Nguyen M."/>
            <person name="Pham P.K."/>
            <person name="Cheuk R.F."/>
            <person name="Karlin-Newmann G."/>
            <person name="Liu S.X."/>
            <person name="Lam B."/>
            <person name="Sakano H."/>
            <person name="Wu T."/>
            <person name="Yu G."/>
            <person name="Miranda M."/>
            <person name="Quach H.L."/>
            <person name="Tripp M."/>
            <person name="Chang C.H."/>
            <person name="Lee J.M."/>
            <person name="Toriumi M.J."/>
            <person name="Chan M.M."/>
            <person name="Tang C.C."/>
            <person name="Onodera C.S."/>
            <person name="Deng J.M."/>
            <person name="Akiyama K."/>
            <person name="Ansari Y."/>
            <person name="Arakawa T."/>
            <person name="Banh J."/>
            <person name="Banno F."/>
            <person name="Bowser L."/>
            <person name="Brooks S.Y."/>
            <person name="Carninci P."/>
            <person name="Chao Q."/>
            <person name="Choy N."/>
            <person name="Enju A."/>
            <person name="Goldsmith A.D."/>
            <person name="Gurjal M."/>
            <person name="Hansen N.F."/>
            <person name="Hayashizaki Y."/>
            <person name="Johnson-Hopson C."/>
            <person name="Hsuan V.W."/>
            <person name="Iida K."/>
            <person name="Karnes M."/>
            <person name="Khan S."/>
            <person name="Koesema E."/>
            <person name="Ishida J."/>
            <person name="Jiang P.X."/>
            <person name="Jones T."/>
            <person name="Kawai J."/>
            <person name="Kamiya A."/>
            <person name="Meyers C."/>
            <person name="Nakajima M."/>
            <person name="Narusaka M."/>
            <person name="Seki M."/>
            <person name="Sakurai T."/>
            <person name="Satou M."/>
            <person name="Tamse R."/>
            <person name="Vaysberg M."/>
            <person name="Wallender E.K."/>
            <person name="Wong C."/>
            <person name="Yamamura Y."/>
            <person name="Yuan S."/>
            <person name="Shinozaki K."/>
            <person name="Davis R.W."/>
            <person name="Theologis A."/>
            <person name="Ecker J.R."/>
        </authorList>
    </citation>
    <scope>NUCLEOTIDE SEQUENCE [LARGE SCALE MRNA]</scope>
    <source>
        <strain>cv. Columbia</strain>
    </source>
</reference>
<reference key="4">
    <citation type="journal article" date="2004" name="Plant Cell">
        <title>Genome-wide analysis of Arabidopsis pentatricopeptide repeat proteins reveals their essential role in organelle biogenesis.</title>
        <authorList>
            <person name="Lurin C."/>
            <person name="Andres C."/>
            <person name="Aubourg S."/>
            <person name="Bellaoui M."/>
            <person name="Bitton F."/>
            <person name="Bruyere C."/>
            <person name="Caboche M."/>
            <person name="Debast C."/>
            <person name="Gualberto J."/>
            <person name="Hoffmann B."/>
            <person name="Lecharny A."/>
            <person name="Le Ret M."/>
            <person name="Martin-Magniette M.-L."/>
            <person name="Mireau H."/>
            <person name="Peeters N."/>
            <person name="Renou J.-P."/>
            <person name="Szurek B."/>
            <person name="Taconnat L."/>
            <person name="Small I."/>
        </authorList>
    </citation>
    <scope>GENE FAMILY</scope>
</reference>